<protein>
    <recommendedName>
        <fullName evidence="5">Large ribosomal subunit protein uL3</fullName>
    </recommendedName>
    <alternativeName>
        <fullName>50S ribosomal protein L3</fullName>
    </alternativeName>
    <alternativeName>
        <fullName>Hl1</fullName>
    </alternativeName>
    <alternativeName>
        <fullName>Hmal3</fullName>
    </alternativeName>
</protein>
<name>RL3_HALMA</name>
<gene>
    <name type="primary">rpl3</name>
    <name type="ordered locus">rrnAC1611</name>
</gene>
<evidence type="ECO:0000250" key="1"/>
<evidence type="ECO:0000256" key="2">
    <source>
        <dbReference type="SAM" id="MobiDB-lite"/>
    </source>
</evidence>
<evidence type="ECO:0000269" key="3">
    <source>
    </source>
</evidence>
<evidence type="ECO:0000269" key="4">
    <source>
    </source>
</evidence>
<evidence type="ECO:0000305" key="5"/>
<evidence type="ECO:0007829" key="6">
    <source>
        <dbReference type="PDB" id="1VQ8"/>
    </source>
</evidence>
<evidence type="ECO:0007829" key="7">
    <source>
        <dbReference type="PDB" id="1VQK"/>
    </source>
</evidence>
<evidence type="ECO:0007829" key="8">
    <source>
        <dbReference type="PDB" id="1VQP"/>
    </source>
</evidence>
<evidence type="ECO:0007829" key="9">
    <source>
        <dbReference type="PDB" id="1YIJ"/>
    </source>
</evidence>
<evidence type="ECO:0007829" key="10">
    <source>
        <dbReference type="PDB" id="2QA4"/>
    </source>
</evidence>
<evidence type="ECO:0007829" key="11">
    <source>
        <dbReference type="PDB" id="3CC4"/>
    </source>
</evidence>
<evidence type="ECO:0007829" key="12">
    <source>
        <dbReference type="PDB" id="3CCJ"/>
    </source>
</evidence>
<evidence type="ECO:0007829" key="13">
    <source>
        <dbReference type="PDB" id="3CCR"/>
    </source>
</evidence>
<feature type="initiator methionine" description="Removed">
    <location>
        <position position="1"/>
    </location>
</feature>
<feature type="chain" id="PRO_0000077207" description="Large ribosomal subunit protein uL3">
    <location>
        <begin position="2"/>
        <end position="338"/>
    </location>
</feature>
<feature type="region of interest" description="Disordered" evidence="2">
    <location>
        <begin position="1"/>
        <end position="44"/>
    </location>
</feature>
<feature type="region of interest" description="Disordered" evidence="2">
    <location>
        <begin position="151"/>
        <end position="170"/>
    </location>
</feature>
<feature type="region of interest" description="Disordered" evidence="2">
    <location>
        <begin position="206"/>
        <end position="259"/>
    </location>
</feature>
<feature type="region of interest" description="Disordered" evidence="2">
    <location>
        <begin position="312"/>
        <end position="338"/>
    </location>
</feature>
<feature type="compositionally biased region" description="Polar residues" evidence="2">
    <location>
        <begin position="22"/>
        <end position="31"/>
    </location>
</feature>
<feature type="compositionally biased region" description="Basic residues" evidence="2">
    <location>
        <begin position="220"/>
        <end position="237"/>
    </location>
</feature>
<feature type="compositionally biased region" description="Polar residues" evidence="2">
    <location>
        <begin position="247"/>
        <end position="259"/>
    </location>
</feature>
<feature type="sequence conflict" description="In Ref. 1; AAA86859." evidence="5" ref="1">
    <original>R</original>
    <variation>P</variation>
    <location>
        <position position="311"/>
    </location>
</feature>
<feature type="sequence conflict" description="In Ref. 1; AA sequence." evidence="5" ref="1">
    <original>F</original>
    <variation>FF</variation>
    <location>
        <position position="312"/>
    </location>
</feature>
<feature type="strand" evidence="6">
    <location>
        <begin position="12"/>
        <end position="14"/>
    </location>
</feature>
<feature type="strand" evidence="8">
    <location>
        <begin position="35"/>
        <end position="39"/>
    </location>
</feature>
<feature type="strand" evidence="6">
    <location>
        <begin position="42"/>
        <end position="55"/>
    </location>
</feature>
<feature type="strand" evidence="12">
    <location>
        <begin position="59"/>
        <end position="61"/>
    </location>
</feature>
<feature type="turn" evidence="6">
    <location>
        <begin position="62"/>
        <end position="65"/>
    </location>
</feature>
<feature type="strand" evidence="6">
    <location>
        <begin position="66"/>
        <end position="76"/>
    </location>
</feature>
<feature type="strand" evidence="6">
    <location>
        <begin position="80"/>
        <end position="91"/>
    </location>
</feature>
<feature type="strand" evidence="6">
    <location>
        <begin position="94"/>
        <end position="102"/>
    </location>
</feature>
<feature type="helix" evidence="6">
    <location>
        <begin position="110"/>
        <end position="112"/>
    </location>
</feature>
<feature type="helix" evidence="6">
    <location>
        <begin position="122"/>
        <end position="135"/>
    </location>
</feature>
<feature type="strand" evidence="6">
    <location>
        <begin position="138"/>
        <end position="146"/>
    </location>
</feature>
<feature type="helix" evidence="6">
    <location>
        <begin position="149"/>
        <end position="151"/>
    </location>
</feature>
<feature type="strand" evidence="11">
    <location>
        <begin position="153"/>
        <end position="155"/>
    </location>
</feature>
<feature type="strand" evidence="6">
    <location>
        <begin position="162"/>
        <end position="168"/>
    </location>
</feature>
<feature type="helix" evidence="6">
    <location>
        <begin position="172"/>
        <end position="185"/>
    </location>
</feature>
<feature type="strand" evidence="13">
    <location>
        <begin position="187"/>
        <end position="189"/>
    </location>
</feature>
<feature type="turn" evidence="6">
    <location>
        <begin position="192"/>
        <end position="194"/>
    </location>
</feature>
<feature type="strand" evidence="6">
    <location>
        <begin position="200"/>
        <end position="206"/>
    </location>
</feature>
<feature type="strand" evidence="7">
    <location>
        <begin position="209"/>
        <end position="213"/>
    </location>
</feature>
<feature type="helix" evidence="6">
    <location>
        <begin position="215"/>
        <end position="219"/>
    </location>
</feature>
<feature type="helix" evidence="6">
    <location>
        <begin position="226"/>
        <end position="229"/>
    </location>
</feature>
<feature type="strand" evidence="6">
    <location>
        <begin position="230"/>
        <end position="232"/>
    </location>
</feature>
<feature type="strand" evidence="9">
    <location>
        <begin position="234"/>
        <end position="236"/>
    </location>
</feature>
<feature type="strand" evidence="6">
    <location>
        <begin position="243"/>
        <end position="247"/>
    </location>
</feature>
<feature type="strand" evidence="10">
    <location>
        <begin position="250"/>
        <end position="252"/>
    </location>
</feature>
<feature type="strand" evidence="7">
    <location>
        <begin position="256"/>
        <end position="259"/>
    </location>
</feature>
<feature type="strand" evidence="6">
    <location>
        <begin position="262"/>
        <end position="279"/>
    </location>
</feature>
<feature type="turn" evidence="6">
    <location>
        <begin position="286"/>
        <end position="288"/>
    </location>
</feature>
<feature type="strand" evidence="6">
    <location>
        <begin position="293"/>
        <end position="300"/>
    </location>
</feature>
<feature type="strand" evidence="6">
    <location>
        <begin position="309"/>
        <end position="314"/>
    </location>
</feature>
<feature type="strand" evidence="6">
    <location>
        <begin position="328"/>
        <end position="331"/>
    </location>
</feature>
<reference key="1">
    <citation type="journal article" date="1990" name="J. Biol. Chem.">
        <title>Organization and nucleotide sequence of a gene cluster coding for eight ribosomal proteins in the archaebacterium Halobacterium marismortui.</title>
        <authorList>
            <person name="Arndt E."/>
            <person name="Kroemer W."/>
            <person name="Hatakeyama T."/>
        </authorList>
    </citation>
    <scope>NUCLEOTIDE SEQUENCE [GENOMIC DNA]</scope>
    <scope>PARTIAL PROTEIN SEQUENCE</scope>
</reference>
<reference key="2">
    <citation type="journal article" date="2004" name="Genome Res.">
        <title>Genome sequence of Haloarcula marismortui: a halophilic archaeon from the Dead Sea.</title>
        <authorList>
            <person name="Baliga N.S."/>
            <person name="Bonneau R."/>
            <person name="Facciotti M.T."/>
            <person name="Pan M."/>
            <person name="Glusman G."/>
            <person name="Deutsch E.W."/>
            <person name="Shannon P."/>
            <person name="Chiu Y."/>
            <person name="Weng R.S."/>
            <person name="Gan R.R."/>
            <person name="Hung P."/>
            <person name="Date S.V."/>
            <person name="Marcotte E."/>
            <person name="Hood L."/>
            <person name="Ng W.V."/>
        </authorList>
    </citation>
    <scope>NUCLEOTIDE SEQUENCE [LARGE SCALE GENOMIC DNA]</scope>
    <source>
        <strain>ATCC 43049 / DSM 3752 / JCM 8966 / VKM B-1809</strain>
    </source>
</reference>
<reference key="3">
    <citation type="journal article" date="2000" name="Science">
        <title>The complete atomic structure of the large ribosomal subunit at 2.4 A resolution.</title>
        <authorList>
            <person name="Ban N."/>
            <person name="Nissen P."/>
            <person name="Hansen J."/>
            <person name="Moore P.B."/>
            <person name="Steitz T.A."/>
        </authorList>
    </citation>
    <scope>X-RAY CRYSTALLOGRAPHY (2.4 ANGSTROMS) OF THE 50S SUBUNIT</scope>
    <source>
        <strain>ATCC 43049 / DSM 3752 / JCM 8966 / VKM B-1809</strain>
    </source>
</reference>
<reference key="4">
    <citation type="journal article" date="2000" name="Science">
        <title>The structural basis of ribosome activity in peptide bond synthesis.</title>
        <authorList>
            <person name="Nissen P."/>
            <person name="Hansen J."/>
            <person name="Ban N."/>
            <person name="Moore P.B."/>
            <person name="Steitz T.A."/>
        </authorList>
    </citation>
    <scope>X-RAY CRYSTALLOGRAPHY (3.0 ANGSTROMS) OF THE 50S SUBUNIT</scope>
    <source>
        <strain>ATCC 43049 / DSM 3752 / JCM 8966 / VKM B-1809</strain>
    </source>
</reference>
<reference key="5">
    <citation type="journal article" date="2002" name="Nat. Struct. Biol.">
        <title>A pre-translocational intermediate in protein synthesis observed in crystals of enzymatically active 50S subunits.</title>
        <authorList>
            <person name="Schmeing T.M."/>
            <person name="Seila A.C."/>
            <person name="Hansen J.L."/>
            <person name="Freeborn B."/>
            <person name="Soukup J.K."/>
            <person name="Scaringe S.A."/>
            <person name="Strobel S.A."/>
            <person name="Moore P.B."/>
            <person name="Steitz T.A."/>
        </authorList>
    </citation>
    <scope>X-RAY CRYSTALLOGRAPHY (3.1 ANGSTROMS) OF THE 50S SUBUNIT</scope>
    <source>
        <strain>ATCC 43049 / DSM 3752 / JCM 8966 / VKM B-1809</strain>
    </source>
</reference>
<reference key="6">
    <citation type="journal article" date="2001" name="EMBO J.">
        <title>The kink-turn: a new RNA secondary structure motif.</title>
        <authorList>
            <person name="Klein D.J."/>
            <person name="Schmeing T.M."/>
            <person name="Moore P.B."/>
            <person name="Steitz T.A."/>
        </authorList>
    </citation>
    <scope>X-RAY CRYSTALLOGRAPHY (2.4 ANGSTROMS) OF THE 50S SUBUNIT</scope>
    <source>
        <strain>ATCC 43049 / DSM 3752 / JCM 8966 / VKM B-1809</strain>
    </source>
</reference>
<reference key="7">
    <citation type="journal article" date="2002" name="Mol. Cell">
        <title>The structures of four macrolide antibiotics bound to the large ribosomal subunit.</title>
        <authorList>
            <person name="Hansen J.L."/>
            <person name="Ippolito J.A."/>
            <person name="Ban N."/>
            <person name="Nissen P."/>
            <person name="Moore P.B."/>
            <person name="Steitz T.A."/>
        </authorList>
    </citation>
    <scope>X-RAY CRYSTALLOGRAPHY (3.0 ANGSTROMS) OF THE 50S SUBUNIT IN COMPLEX WITH FOUR MACROLIDE ANTIBIOTICS</scope>
    <source>
        <strain>ATCC 43049 / DSM 3752 / JCM 8966 / VKM B-1809</strain>
    </source>
</reference>
<reference key="8">
    <citation type="journal article" date="2002" name="Proc. Natl. Acad. Sci. U.S.A.">
        <title>Structural insights into peptide bond formation.</title>
        <authorList>
            <person name="Hansen J.L."/>
            <person name="Schmeing T.M."/>
            <person name="Moore P.B."/>
            <person name="Steitz T.A."/>
        </authorList>
    </citation>
    <scope>X-RAY CRYSTALLOGRAPHY (2.8 ANGSTROMS) OF THE 50S SUBUNIT</scope>
    <source>
        <strain>ATCC 43049 / DSM 3752 / JCM 8966 / VKM B-1809</strain>
    </source>
</reference>
<reference key="9">
    <citation type="journal article" date="2003" name="J. Mol. Biol.">
        <title>Structures of five antibiotics bound at the peptidyl transferase center of the large ribosomal subunit.</title>
        <authorList>
            <person name="Hansen J.L."/>
            <person name="Moore P.B."/>
            <person name="Steitz T.A."/>
        </authorList>
    </citation>
    <scope>X-RAY CRYSTALLOGRAPHY (3.0 ANGSTROMS) OF THE 50S SUBUNIT IN COMPLEX WITH FIVE ANTIBIOTICS AT THE PEPTIDYL TRANSFERASE CENTER</scope>
    <source>
        <strain>ATCC 43049 / DSM 3752 / JCM 8966 / VKM B-1809</strain>
    </source>
</reference>
<reference key="10">
    <citation type="journal article" date="2003" name="RNA">
        <title>Structures of deacylated tRNA mimics bound to the E site of the large ribosomal subunit.</title>
        <authorList>
            <person name="Schmeing T.M."/>
            <person name="Moore P.B."/>
            <person name="Steitz T.A."/>
        </authorList>
    </citation>
    <scope>X-RAY CRYSTALLOGRAPHY (2.9 ANGSTROMS) OF THE 50S SUBUNIT WITH TWO DIFFERENT E SITE SUBSTRATES</scope>
</reference>
<reference key="11">
    <citation type="journal article" date="2013" name="Acta Crystallogr. D">
        <title>Revisiting the Haloarcula marismortui 50S ribosomal subunit model.</title>
        <authorList>
            <person name="Gabdulkhakov A."/>
            <person name="Nikonov S."/>
            <person name="Garber M."/>
        </authorList>
    </citation>
    <scope>X-RAY CRYSTALLOGRAPHY (2.4 ANGSTROMS) OF THE 50S SUBUNIT</scope>
</reference>
<accession>P20279</accession>
<accession>Q5V1S4</accession>
<organism>
    <name type="scientific">Haloarcula marismortui (strain ATCC 43049 / DSM 3752 / JCM 8966 / VKM B-1809)</name>
    <name type="common">Halobacterium marismortui</name>
    <dbReference type="NCBI Taxonomy" id="272569"/>
    <lineage>
        <taxon>Archaea</taxon>
        <taxon>Methanobacteriati</taxon>
        <taxon>Methanobacteriota</taxon>
        <taxon>Stenosarchaea group</taxon>
        <taxon>Halobacteria</taxon>
        <taxon>Halobacteriales</taxon>
        <taxon>Haloarculaceae</taxon>
        <taxon>Haloarcula</taxon>
    </lineage>
</organism>
<dbReference type="EMBL" id="J05222">
    <property type="protein sequence ID" value="AAA86859.1"/>
    <property type="molecule type" value="Genomic_DNA"/>
</dbReference>
<dbReference type="EMBL" id="AY596297">
    <property type="protein sequence ID" value="AAV46528.1"/>
    <property type="molecule type" value="Genomic_DNA"/>
</dbReference>
<dbReference type="PIR" id="C35063">
    <property type="entry name" value="R5HS3L"/>
</dbReference>
<dbReference type="PDB" id="1FFK">
    <property type="method" value="X-ray"/>
    <property type="resolution" value="2.40 A"/>
    <property type="chains" value="B=2-338"/>
</dbReference>
<dbReference type="PDB" id="1JJ2">
    <property type="method" value="X-ray"/>
    <property type="resolution" value="2.40 A"/>
    <property type="chains" value="B=2-338"/>
</dbReference>
<dbReference type="PDB" id="1K73">
    <property type="method" value="X-ray"/>
    <property type="resolution" value="3.01 A"/>
    <property type="chains" value="D=2-338"/>
</dbReference>
<dbReference type="PDB" id="1K8A">
    <property type="method" value="X-ray"/>
    <property type="resolution" value="3.00 A"/>
    <property type="chains" value="D=2-338"/>
</dbReference>
<dbReference type="PDB" id="1K9M">
    <property type="method" value="X-ray"/>
    <property type="resolution" value="3.00 A"/>
    <property type="chains" value="D=2-338"/>
</dbReference>
<dbReference type="PDB" id="1KC8">
    <property type="method" value="X-ray"/>
    <property type="resolution" value="3.01 A"/>
    <property type="chains" value="D=2-338"/>
</dbReference>
<dbReference type="PDB" id="1KD1">
    <property type="method" value="X-ray"/>
    <property type="resolution" value="3.00 A"/>
    <property type="chains" value="D=2-338"/>
</dbReference>
<dbReference type="PDB" id="1KQS">
    <property type="method" value="X-ray"/>
    <property type="resolution" value="3.10 A"/>
    <property type="chains" value="B=2-338"/>
</dbReference>
<dbReference type="PDB" id="1M1K">
    <property type="method" value="X-ray"/>
    <property type="resolution" value="3.20 A"/>
    <property type="chains" value="D=2-338"/>
</dbReference>
<dbReference type="PDB" id="1M90">
    <property type="method" value="X-ray"/>
    <property type="resolution" value="2.80 A"/>
    <property type="chains" value="D=2-338"/>
</dbReference>
<dbReference type="PDB" id="1ML5">
    <property type="method" value="EM"/>
    <property type="resolution" value="14.00 A"/>
    <property type="chains" value="e=2-311, e=312-338"/>
</dbReference>
<dbReference type="PDB" id="1N8R">
    <property type="method" value="X-ray"/>
    <property type="resolution" value="3.00 A"/>
    <property type="chains" value="D=2-338"/>
</dbReference>
<dbReference type="PDB" id="1NJI">
    <property type="method" value="X-ray"/>
    <property type="resolution" value="3.00 A"/>
    <property type="chains" value="D=2-338"/>
</dbReference>
<dbReference type="PDB" id="1Q7Y">
    <property type="method" value="X-ray"/>
    <property type="resolution" value="3.20 A"/>
    <property type="chains" value="D=2-338"/>
</dbReference>
<dbReference type="PDB" id="1Q81">
    <property type="method" value="X-ray"/>
    <property type="resolution" value="2.95 A"/>
    <property type="chains" value="D=2-338"/>
</dbReference>
<dbReference type="PDB" id="1Q82">
    <property type="method" value="X-ray"/>
    <property type="resolution" value="2.98 A"/>
    <property type="chains" value="D=2-338"/>
</dbReference>
<dbReference type="PDB" id="1Q86">
    <property type="method" value="X-ray"/>
    <property type="resolution" value="3.00 A"/>
    <property type="chains" value="D=2-338"/>
</dbReference>
<dbReference type="PDB" id="1QVF">
    <property type="method" value="X-ray"/>
    <property type="resolution" value="3.10 A"/>
    <property type="chains" value="B=2-338"/>
</dbReference>
<dbReference type="PDB" id="1QVG">
    <property type="method" value="X-ray"/>
    <property type="resolution" value="2.90 A"/>
    <property type="chains" value="B=2-338"/>
</dbReference>
<dbReference type="PDB" id="1S72">
    <property type="method" value="X-ray"/>
    <property type="resolution" value="2.40 A"/>
    <property type="chains" value="B=1-338"/>
</dbReference>
<dbReference type="PDB" id="1VQ4">
    <property type="method" value="X-ray"/>
    <property type="resolution" value="2.70 A"/>
    <property type="chains" value="B=1-338"/>
</dbReference>
<dbReference type="PDB" id="1VQ5">
    <property type="method" value="X-ray"/>
    <property type="resolution" value="2.60 A"/>
    <property type="chains" value="B=1-338"/>
</dbReference>
<dbReference type="PDB" id="1VQ6">
    <property type="method" value="X-ray"/>
    <property type="resolution" value="2.70 A"/>
    <property type="chains" value="B=1-338"/>
</dbReference>
<dbReference type="PDB" id="1VQ7">
    <property type="method" value="X-ray"/>
    <property type="resolution" value="2.50 A"/>
    <property type="chains" value="B=1-338"/>
</dbReference>
<dbReference type="PDB" id="1VQ8">
    <property type="method" value="X-ray"/>
    <property type="resolution" value="2.20 A"/>
    <property type="chains" value="B=1-338"/>
</dbReference>
<dbReference type="PDB" id="1VQ9">
    <property type="method" value="X-ray"/>
    <property type="resolution" value="2.40 A"/>
    <property type="chains" value="B=1-338"/>
</dbReference>
<dbReference type="PDB" id="1VQK">
    <property type="method" value="X-ray"/>
    <property type="resolution" value="2.30 A"/>
    <property type="chains" value="B=1-338"/>
</dbReference>
<dbReference type="PDB" id="1VQL">
    <property type="method" value="X-ray"/>
    <property type="resolution" value="2.30 A"/>
    <property type="chains" value="B=1-338"/>
</dbReference>
<dbReference type="PDB" id="1VQM">
    <property type="method" value="X-ray"/>
    <property type="resolution" value="2.30 A"/>
    <property type="chains" value="B=1-338"/>
</dbReference>
<dbReference type="PDB" id="1VQN">
    <property type="method" value="X-ray"/>
    <property type="resolution" value="2.40 A"/>
    <property type="chains" value="B=1-338"/>
</dbReference>
<dbReference type="PDB" id="1VQO">
    <property type="method" value="X-ray"/>
    <property type="resolution" value="2.20 A"/>
    <property type="chains" value="B=1-338"/>
</dbReference>
<dbReference type="PDB" id="1VQP">
    <property type="method" value="X-ray"/>
    <property type="resolution" value="2.25 A"/>
    <property type="chains" value="B=1-338"/>
</dbReference>
<dbReference type="PDB" id="1W2B">
    <property type="method" value="X-ray"/>
    <property type="resolution" value="3.50 A"/>
    <property type="chains" value="B=2-338"/>
</dbReference>
<dbReference type="PDB" id="1YHQ">
    <property type="method" value="X-ray"/>
    <property type="resolution" value="2.40 A"/>
    <property type="chains" value="B=1-338"/>
</dbReference>
<dbReference type="PDB" id="1YI2">
    <property type="method" value="X-ray"/>
    <property type="resolution" value="2.65 A"/>
    <property type="chains" value="B=1-338"/>
</dbReference>
<dbReference type="PDB" id="1YIJ">
    <property type="method" value="X-ray"/>
    <property type="resolution" value="2.60 A"/>
    <property type="chains" value="B=1-338"/>
</dbReference>
<dbReference type="PDB" id="1YIT">
    <property type="method" value="X-ray"/>
    <property type="resolution" value="2.80 A"/>
    <property type="chains" value="B=1-338"/>
</dbReference>
<dbReference type="PDB" id="1YJ9">
    <property type="method" value="X-ray"/>
    <property type="resolution" value="2.90 A"/>
    <property type="chains" value="B=1-338"/>
</dbReference>
<dbReference type="PDB" id="1YJN">
    <property type="method" value="X-ray"/>
    <property type="resolution" value="3.00 A"/>
    <property type="chains" value="B=1-338"/>
</dbReference>
<dbReference type="PDB" id="1YJW">
    <property type="method" value="X-ray"/>
    <property type="resolution" value="2.90 A"/>
    <property type="chains" value="B=1-338"/>
</dbReference>
<dbReference type="PDB" id="2OTJ">
    <property type="method" value="X-ray"/>
    <property type="resolution" value="2.90 A"/>
    <property type="chains" value="B=1-338"/>
</dbReference>
<dbReference type="PDB" id="2OTL">
    <property type="method" value="X-ray"/>
    <property type="resolution" value="2.70 A"/>
    <property type="chains" value="B=2-338"/>
</dbReference>
<dbReference type="PDB" id="2QA4">
    <property type="method" value="X-ray"/>
    <property type="resolution" value="3.00 A"/>
    <property type="chains" value="B=1-338"/>
</dbReference>
<dbReference type="PDB" id="2QEX">
    <property type="method" value="X-ray"/>
    <property type="resolution" value="2.90 A"/>
    <property type="chains" value="B=1-338"/>
</dbReference>
<dbReference type="PDB" id="3CC2">
    <property type="method" value="X-ray"/>
    <property type="resolution" value="2.40 A"/>
    <property type="chains" value="B=1-338"/>
</dbReference>
<dbReference type="PDB" id="3CC4">
    <property type="method" value="X-ray"/>
    <property type="resolution" value="2.70 A"/>
    <property type="chains" value="B=1-338"/>
</dbReference>
<dbReference type="PDB" id="3CC7">
    <property type="method" value="X-ray"/>
    <property type="resolution" value="2.70 A"/>
    <property type="chains" value="B=1-338"/>
</dbReference>
<dbReference type="PDB" id="3CCE">
    <property type="method" value="X-ray"/>
    <property type="resolution" value="2.75 A"/>
    <property type="chains" value="B=1-338"/>
</dbReference>
<dbReference type="PDB" id="3CCJ">
    <property type="method" value="X-ray"/>
    <property type="resolution" value="2.70 A"/>
    <property type="chains" value="B=1-338"/>
</dbReference>
<dbReference type="PDB" id="3CCL">
    <property type="method" value="X-ray"/>
    <property type="resolution" value="2.90 A"/>
    <property type="chains" value="B=1-338"/>
</dbReference>
<dbReference type="PDB" id="3CCM">
    <property type="method" value="X-ray"/>
    <property type="resolution" value="2.55 A"/>
    <property type="chains" value="B=1-338"/>
</dbReference>
<dbReference type="PDB" id="3CCQ">
    <property type="method" value="X-ray"/>
    <property type="resolution" value="2.90 A"/>
    <property type="chains" value="B=1-338"/>
</dbReference>
<dbReference type="PDB" id="3CCR">
    <property type="method" value="X-ray"/>
    <property type="resolution" value="3.00 A"/>
    <property type="chains" value="B=1-338"/>
</dbReference>
<dbReference type="PDB" id="3CCS">
    <property type="method" value="X-ray"/>
    <property type="resolution" value="2.95 A"/>
    <property type="chains" value="B=1-338"/>
</dbReference>
<dbReference type="PDB" id="3CCU">
    <property type="method" value="X-ray"/>
    <property type="resolution" value="2.80 A"/>
    <property type="chains" value="B=1-338"/>
</dbReference>
<dbReference type="PDB" id="3CCV">
    <property type="method" value="X-ray"/>
    <property type="resolution" value="2.90 A"/>
    <property type="chains" value="B=1-338"/>
</dbReference>
<dbReference type="PDB" id="3CD6">
    <property type="method" value="X-ray"/>
    <property type="resolution" value="2.75 A"/>
    <property type="chains" value="B=1-338"/>
</dbReference>
<dbReference type="PDB" id="3CMA">
    <property type="method" value="X-ray"/>
    <property type="resolution" value="2.80 A"/>
    <property type="chains" value="B=1-338"/>
</dbReference>
<dbReference type="PDB" id="3CME">
    <property type="method" value="X-ray"/>
    <property type="resolution" value="2.95 A"/>
    <property type="chains" value="B=1-338"/>
</dbReference>
<dbReference type="PDB" id="3CPW">
    <property type="method" value="X-ray"/>
    <property type="resolution" value="2.70 A"/>
    <property type="chains" value="B=1-338"/>
</dbReference>
<dbReference type="PDB" id="3CXC">
    <property type="method" value="X-ray"/>
    <property type="resolution" value="3.00 A"/>
    <property type="chains" value="B=2-338"/>
</dbReference>
<dbReference type="PDB" id="3G4S">
    <property type="method" value="X-ray"/>
    <property type="resolution" value="3.20 A"/>
    <property type="chains" value="B=2-338"/>
</dbReference>
<dbReference type="PDB" id="3G6E">
    <property type="method" value="X-ray"/>
    <property type="resolution" value="2.70 A"/>
    <property type="chains" value="B=2-338"/>
</dbReference>
<dbReference type="PDB" id="3G71">
    <property type="method" value="X-ray"/>
    <property type="resolution" value="2.85 A"/>
    <property type="chains" value="B=2-338"/>
</dbReference>
<dbReference type="PDB" id="3I55">
    <property type="method" value="X-ray"/>
    <property type="resolution" value="3.11 A"/>
    <property type="chains" value="B=1-338"/>
</dbReference>
<dbReference type="PDB" id="3I56">
    <property type="method" value="X-ray"/>
    <property type="resolution" value="2.90 A"/>
    <property type="chains" value="B=1-338"/>
</dbReference>
<dbReference type="PDB" id="3OW2">
    <property type="method" value="X-ray"/>
    <property type="resolution" value="2.70 A"/>
    <property type="chains" value="B=2-338"/>
</dbReference>
<dbReference type="PDB" id="4ADX">
    <property type="method" value="EM"/>
    <property type="resolution" value="6.60 A"/>
    <property type="chains" value="B=1-338"/>
</dbReference>
<dbReference type="PDB" id="4V42">
    <property type="method" value="X-ray"/>
    <property type="resolution" value="5.50 A"/>
    <property type="chains" value="BE=2-338"/>
</dbReference>
<dbReference type="PDB" id="4V4R">
    <property type="method" value="X-ray"/>
    <property type="resolution" value="5.90 A"/>
    <property type="chains" value="BE=2-338"/>
</dbReference>
<dbReference type="PDB" id="4V4S">
    <property type="method" value="X-ray"/>
    <property type="resolution" value="6.76 A"/>
    <property type="chains" value="BE=2-338"/>
</dbReference>
<dbReference type="PDB" id="4V4T">
    <property type="method" value="X-ray"/>
    <property type="resolution" value="6.46 A"/>
    <property type="chains" value="E=2-338"/>
</dbReference>
<dbReference type="PDB" id="4V9F">
    <property type="method" value="X-ray"/>
    <property type="resolution" value="2.40 A"/>
    <property type="chains" value="B=1-338"/>
</dbReference>
<dbReference type="PDBsum" id="1FFK"/>
<dbReference type="PDBsum" id="1JJ2"/>
<dbReference type="PDBsum" id="1K73"/>
<dbReference type="PDBsum" id="1K8A"/>
<dbReference type="PDBsum" id="1K9M"/>
<dbReference type="PDBsum" id="1KC8"/>
<dbReference type="PDBsum" id="1KD1"/>
<dbReference type="PDBsum" id="1KQS"/>
<dbReference type="PDBsum" id="1M1K"/>
<dbReference type="PDBsum" id="1M90"/>
<dbReference type="PDBsum" id="1ML5"/>
<dbReference type="PDBsum" id="1N8R"/>
<dbReference type="PDBsum" id="1NJI"/>
<dbReference type="PDBsum" id="1Q7Y"/>
<dbReference type="PDBsum" id="1Q81"/>
<dbReference type="PDBsum" id="1Q82"/>
<dbReference type="PDBsum" id="1Q86"/>
<dbReference type="PDBsum" id="1QVF"/>
<dbReference type="PDBsum" id="1QVG"/>
<dbReference type="PDBsum" id="1S72"/>
<dbReference type="PDBsum" id="1VQ4"/>
<dbReference type="PDBsum" id="1VQ5"/>
<dbReference type="PDBsum" id="1VQ6"/>
<dbReference type="PDBsum" id="1VQ7"/>
<dbReference type="PDBsum" id="1VQ8"/>
<dbReference type="PDBsum" id="1VQ9"/>
<dbReference type="PDBsum" id="1VQK"/>
<dbReference type="PDBsum" id="1VQL"/>
<dbReference type="PDBsum" id="1VQM"/>
<dbReference type="PDBsum" id="1VQN"/>
<dbReference type="PDBsum" id="1VQO"/>
<dbReference type="PDBsum" id="1VQP"/>
<dbReference type="PDBsum" id="1W2B"/>
<dbReference type="PDBsum" id="1YHQ"/>
<dbReference type="PDBsum" id="1YI2"/>
<dbReference type="PDBsum" id="1YIJ"/>
<dbReference type="PDBsum" id="1YIT"/>
<dbReference type="PDBsum" id="1YJ9"/>
<dbReference type="PDBsum" id="1YJN"/>
<dbReference type="PDBsum" id="1YJW"/>
<dbReference type="PDBsum" id="2OTJ"/>
<dbReference type="PDBsum" id="2OTL"/>
<dbReference type="PDBsum" id="2QA4"/>
<dbReference type="PDBsum" id="2QEX"/>
<dbReference type="PDBsum" id="3CC2"/>
<dbReference type="PDBsum" id="3CC4"/>
<dbReference type="PDBsum" id="3CC7"/>
<dbReference type="PDBsum" id="3CCE"/>
<dbReference type="PDBsum" id="3CCJ"/>
<dbReference type="PDBsum" id="3CCL"/>
<dbReference type="PDBsum" id="3CCM"/>
<dbReference type="PDBsum" id="3CCQ"/>
<dbReference type="PDBsum" id="3CCR"/>
<dbReference type="PDBsum" id="3CCS"/>
<dbReference type="PDBsum" id="3CCU"/>
<dbReference type="PDBsum" id="3CCV"/>
<dbReference type="PDBsum" id="3CD6"/>
<dbReference type="PDBsum" id="3CMA"/>
<dbReference type="PDBsum" id="3CME"/>
<dbReference type="PDBsum" id="3CPW"/>
<dbReference type="PDBsum" id="3CXC"/>
<dbReference type="PDBsum" id="3G4S"/>
<dbReference type="PDBsum" id="3G6E"/>
<dbReference type="PDBsum" id="3G71"/>
<dbReference type="PDBsum" id="3I55"/>
<dbReference type="PDBsum" id="3I56"/>
<dbReference type="PDBsum" id="3OW2"/>
<dbReference type="PDBsum" id="4ADX"/>
<dbReference type="PDBsum" id="4V42"/>
<dbReference type="PDBsum" id="4V4R"/>
<dbReference type="PDBsum" id="4V4S"/>
<dbReference type="PDBsum" id="4V4T"/>
<dbReference type="PDBsum" id="4V9F"/>
<dbReference type="SMR" id="P20279"/>
<dbReference type="IntAct" id="P20279">
    <property type="interactions" value="3"/>
</dbReference>
<dbReference type="STRING" id="272569.rrnAC1611"/>
<dbReference type="PaxDb" id="272569-rrnAC1611"/>
<dbReference type="EnsemblBacteria" id="AAV46528">
    <property type="protein sequence ID" value="AAV46528"/>
    <property type="gene ID" value="rrnAC1611"/>
</dbReference>
<dbReference type="KEGG" id="hma:rrnAC1611"/>
<dbReference type="PATRIC" id="fig|272569.17.peg.2301"/>
<dbReference type="eggNOG" id="arCOG04070">
    <property type="taxonomic scope" value="Archaea"/>
</dbReference>
<dbReference type="HOGENOM" id="CLU_033361_2_0_2"/>
<dbReference type="EvolutionaryTrace" id="P20279"/>
<dbReference type="Proteomes" id="UP000001169">
    <property type="component" value="Chromosome I"/>
</dbReference>
<dbReference type="GO" id="GO:0022625">
    <property type="term" value="C:cytosolic large ribosomal subunit"/>
    <property type="evidence" value="ECO:0007669"/>
    <property type="project" value="TreeGrafter"/>
</dbReference>
<dbReference type="GO" id="GO:0019843">
    <property type="term" value="F:rRNA binding"/>
    <property type="evidence" value="ECO:0007669"/>
    <property type="project" value="UniProtKB-UniRule"/>
</dbReference>
<dbReference type="GO" id="GO:0003735">
    <property type="term" value="F:structural constituent of ribosome"/>
    <property type="evidence" value="ECO:0007669"/>
    <property type="project" value="InterPro"/>
</dbReference>
<dbReference type="GO" id="GO:0006412">
    <property type="term" value="P:translation"/>
    <property type="evidence" value="ECO:0007669"/>
    <property type="project" value="UniProtKB-UniRule"/>
</dbReference>
<dbReference type="Gene3D" id="3.30.1430.10">
    <property type="match status" value="1"/>
</dbReference>
<dbReference type="Gene3D" id="4.10.960.10">
    <property type="entry name" value="Ribosomal protein L3, domain 3"/>
    <property type="match status" value="1"/>
</dbReference>
<dbReference type="Gene3D" id="2.40.30.10">
    <property type="entry name" value="Translation factors"/>
    <property type="match status" value="1"/>
</dbReference>
<dbReference type="HAMAP" id="MF_01325_A">
    <property type="entry name" value="Ribosomal_uL3_A"/>
    <property type="match status" value="1"/>
</dbReference>
<dbReference type="InterPro" id="IPR045077">
    <property type="entry name" value="L3_arc_euk"/>
</dbReference>
<dbReference type="InterPro" id="IPR044892">
    <property type="entry name" value="Ribosomal_L3_dom_3_arc_sf"/>
</dbReference>
<dbReference type="InterPro" id="IPR000597">
    <property type="entry name" value="Ribosomal_uL3"/>
</dbReference>
<dbReference type="InterPro" id="IPR019928">
    <property type="entry name" value="Ribosomal_uL3_arc"/>
</dbReference>
<dbReference type="InterPro" id="IPR019926">
    <property type="entry name" value="Ribosomal_uL3_CS"/>
</dbReference>
<dbReference type="InterPro" id="IPR009000">
    <property type="entry name" value="Transl_B-barrel_sf"/>
</dbReference>
<dbReference type="NCBIfam" id="TIGR03626">
    <property type="entry name" value="L3_arch"/>
    <property type="match status" value="1"/>
</dbReference>
<dbReference type="NCBIfam" id="NF003261">
    <property type="entry name" value="PRK04231.1"/>
    <property type="match status" value="1"/>
</dbReference>
<dbReference type="PANTHER" id="PTHR11363">
    <property type="entry name" value="60S RIBOSOMAL PROTEIN L3-RELATED"/>
    <property type="match status" value="1"/>
</dbReference>
<dbReference type="PANTHER" id="PTHR11363:SF5">
    <property type="entry name" value="LARGE RIBOSOMAL SUBUNIT PROTEIN UL3"/>
    <property type="match status" value="1"/>
</dbReference>
<dbReference type="Pfam" id="PF00297">
    <property type="entry name" value="Ribosomal_L3"/>
    <property type="match status" value="1"/>
</dbReference>
<dbReference type="SUPFAM" id="SSF50447">
    <property type="entry name" value="Translation proteins"/>
    <property type="match status" value="1"/>
</dbReference>
<dbReference type="PROSITE" id="PS00474">
    <property type="entry name" value="RIBOSOMAL_L3"/>
    <property type="match status" value="1"/>
</dbReference>
<comment type="function">
    <text evidence="1">One of the primary rRNA binding proteins, it binds directly near the 3'-end of the 23S rRNA, where it nucleates assembly of the 50S subunit.</text>
</comment>
<comment type="subunit">
    <text evidence="3 4">Part of the 50S ribosomal subunit. Forms a cluster with proteins L14 and L24e. Interacts weakly with protein L13.</text>
</comment>
<comment type="similarity">
    <text evidence="5">Belongs to the universal ribosomal protein uL3 family.</text>
</comment>
<proteinExistence type="evidence at protein level"/>
<keyword id="KW-0002">3D-structure</keyword>
<keyword id="KW-0903">Direct protein sequencing</keyword>
<keyword id="KW-1185">Reference proteome</keyword>
<keyword id="KW-0687">Ribonucleoprotein</keyword>
<keyword id="KW-0689">Ribosomal protein</keyword>
<keyword id="KW-0694">RNA-binding</keyword>
<keyword id="KW-0699">rRNA-binding</keyword>
<sequence length="338" mass="37341">MPQPSRPRKGSLGFGPRKRSTSETPRFNSWPSDDGQPGVQGFAGYKAGMTHVVLVNDEPNSPREGMEETVPVTVIETPPMRAVALRAYEDTPYGQRPLTEVWTDEFHSELDRTLDVPEDHDPDAAEEQIRDAHEAGDLGDLRLITHTVPDAVPSVPKKKPDVMETRVGGGSVSDRLDHALDIVEDGGEHAMNDIFRAGEYADVAGVTKGKGTQGPVKRWGVQKRKGKHARQGWRRRIGNLGPWNPSRVRSTVPQQGQTGYHQRTELNKRLIDIGEGDEPTVDGGFVNYGEVDGPYTLVKGSVPGPDKRLVRFRPAVRPNDQPRLDPEVRYVSNESNQG</sequence>